<feature type="chain" id="PRO_1000009720" description="dCTP deaminase">
    <location>
        <begin position="1"/>
        <end position="193"/>
    </location>
</feature>
<feature type="region of interest" description="Disordered" evidence="2">
    <location>
        <begin position="169"/>
        <end position="193"/>
    </location>
</feature>
<feature type="active site" description="Proton donor/acceptor" evidence="1">
    <location>
        <position position="138"/>
    </location>
</feature>
<feature type="binding site" evidence="1">
    <location>
        <begin position="110"/>
        <end position="115"/>
    </location>
    <ligand>
        <name>dCTP</name>
        <dbReference type="ChEBI" id="CHEBI:61481"/>
    </ligand>
</feature>
<feature type="binding site" evidence="1">
    <location>
        <position position="128"/>
    </location>
    <ligand>
        <name>dCTP</name>
        <dbReference type="ChEBI" id="CHEBI:61481"/>
    </ligand>
</feature>
<feature type="binding site" evidence="1">
    <location>
        <begin position="136"/>
        <end position="138"/>
    </location>
    <ligand>
        <name>dCTP</name>
        <dbReference type="ChEBI" id="CHEBI:61481"/>
    </ligand>
</feature>
<feature type="binding site" evidence="1">
    <location>
        <position position="171"/>
    </location>
    <ligand>
        <name>dCTP</name>
        <dbReference type="ChEBI" id="CHEBI:61481"/>
    </ligand>
</feature>
<feature type="binding site" evidence="1">
    <location>
        <position position="178"/>
    </location>
    <ligand>
        <name>dCTP</name>
        <dbReference type="ChEBI" id="CHEBI:61481"/>
    </ligand>
</feature>
<feature type="binding site" evidence="1">
    <location>
        <position position="182"/>
    </location>
    <ligand>
        <name>dCTP</name>
        <dbReference type="ChEBI" id="CHEBI:61481"/>
    </ligand>
</feature>
<evidence type="ECO:0000255" key="1">
    <source>
        <dbReference type="HAMAP-Rule" id="MF_00146"/>
    </source>
</evidence>
<evidence type="ECO:0000256" key="2">
    <source>
        <dbReference type="SAM" id="MobiDB-lite"/>
    </source>
</evidence>
<comment type="function">
    <text evidence="1">Catalyzes the deamination of dCTP to dUTP.</text>
</comment>
<comment type="catalytic activity">
    <reaction evidence="1">
        <text>dCTP + H2O + H(+) = dUTP + NH4(+)</text>
        <dbReference type="Rhea" id="RHEA:22680"/>
        <dbReference type="ChEBI" id="CHEBI:15377"/>
        <dbReference type="ChEBI" id="CHEBI:15378"/>
        <dbReference type="ChEBI" id="CHEBI:28938"/>
        <dbReference type="ChEBI" id="CHEBI:61481"/>
        <dbReference type="ChEBI" id="CHEBI:61555"/>
        <dbReference type="EC" id="3.5.4.13"/>
    </reaction>
</comment>
<comment type="pathway">
    <text evidence="1">Pyrimidine metabolism; dUMP biosynthesis; dUMP from dCTP (dUTP route): step 1/2.</text>
</comment>
<comment type="subunit">
    <text evidence="1">Homotrimer.</text>
</comment>
<comment type="similarity">
    <text evidence="1">Belongs to the dCTP deaminase family.</text>
</comment>
<accession>A7MHG9</accession>
<dbReference type="EC" id="3.5.4.13" evidence="1"/>
<dbReference type="EMBL" id="CP000783">
    <property type="protein sequence ID" value="ABU76420.1"/>
    <property type="molecule type" value="Genomic_DNA"/>
</dbReference>
<dbReference type="RefSeq" id="WP_004386756.1">
    <property type="nucleotide sequence ID" value="NC_009778.1"/>
</dbReference>
<dbReference type="SMR" id="A7MHG9"/>
<dbReference type="GeneID" id="56730017"/>
<dbReference type="KEGG" id="esa:ESA_01153"/>
<dbReference type="HOGENOM" id="CLU_087476_2_0_6"/>
<dbReference type="UniPathway" id="UPA00610">
    <property type="reaction ID" value="UER00665"/>
</dbReference>
<dbReference type="Proteomes" id="UP000000260">
    <property type="component" value="Chromosome"/>
</dbReference>
<dbReference type="GO" id="GO:0008829">
    <property type="term" value="F:dCTP deaminase activity"/>
    <property type="evidence" value="ECO:0007669"/>
    <property type="project" value="UniProtKB-UniRule"/>
</dbReference>
<dbReference type="GO" id="GO:0000166">
    <property type="term" value="F:nucleotide binding"/>
    <property type="evidence" value="ECO:0007669"/>
    <property type="project" value="UniProtKB-KW"/>
</dbReference>
<dbReference type="GO" id="GO:0006226">
    <property type="term" value="P:dUMP biosynthetic process"/>
    <property type="evidence" value="ECO:0007669"/>
    <property type="project" value="UniProtKB-UniPathway"/>
</dbReference>
<dbReference type="GO" id="GO:0006229">
    <property type="term" value="P:dUTP biosynthetic process"/>
    <property type="evidence" value="ECO:0007669"/>
    <property type="project" value="UniProtKB-UniRule"/>
</dbReference>
<dbReference type="GO" id="GO:0015949">
    <property type="term" value="P:nucleobase-containing small molecule interconversion"/>
    <property type="evidence" value="ECO:0007669"/>
    <property type="project" value="TreeGrafter"/>
</dbReference>
<dbReference type="CDD" id="cd07557">
    <property type="entry name" value="trimeric_dUTPase"/>
    <property type="match status" value="1"/>
</dbReference>
<dbReference type="FunFam" id="2.70.40.10:FF:000003">
    <property type="entry name" value="dCTP deaminase"/>
    <property type="match status" value="1"/>
</dbReference>
<dbReference type="Gene3D" id="2.70.40.10">
    <property type="match status" value="1"/>
</dbReference>
<dbReference type="HAMAP" id="MF_00146">
    <property type="entry name" value="dCTP_deaminase"/>
    <property type="match status" value="1"/>
</dbReference>
<dbReference type="InterPro" id="IPR011962">
    <property type="entry name" value="dCTP_deaminase"/>
</dbReference>
<dbReference type="InterPro" id="IPR036157">
    <property type="entry name" value="dUTPase-like_sf"/>
</dbReference>
<dbReference type="InterPro" id="IPR033704">
    <property type="entry name" value="dUTPase_trimeric"/>
</dbReference>
<dbReference type="NCBIfam" id="TIGR02274">
    <property type="entry name" value="dCTP_deam"/>
    <property type="match status" value="1"/>
</dbReference>
<dbReference type="PANTHER" id="PTHR42680">
    <property type="entry name" value="DCTP DEAMINASE"/>
    <property type="match status" value="1"/>
</dbReference>
<dbReference type="PANTHER" id="PTHR42680:SF3">
    <property type="entry name" value="DCTP DEAMINASE"/>
    <property type="match status" value="1"/>
</dbReference>
<dbReference type="Pfam" id="PF22769">
    <property type="entry name" value="DCD"/>
    <property type="match status" value="1"/>
</dbReference>
<dbReference type="SUPFAM" id="SSF51283">
    <property type="entry name" value="dUTPase-like"/>
    <property type="match status" value="1"/>
</dbReference>
<sequence length="193" mass="21268">MRLCDRDIEAWLDEGRLAITPRPPVERINGATVDVRLGNKFRTFRGHTAAYIDLSGPKDEVSAALDRVMSDEIVLNDGEAFFLHPGELALAVTYESVTLPADLVGWLDGRSSLARLGLMVHVTAHRIDPGWQGCIVLEFYNSGKLPLALRPGMLIGALSFEPLSGPAARPYNRRQDAKYRDQQGAVASRIDKD</sequence>
<proteinExistence type="inferred from homology"/>
<keyword id="KW-0378">Hydrolase</keyword>
<keyword id="KW-0546">Nucleotide metabolism</keyword>
<keyword id="KW-0547">Nucleotide-binding</keyword>
<keyword id="KW-1185">Reference proteome</keyword>
<reference key="1">
    <citation type="journal article" date="2010" name="PLoS ONE">
        <title>Genome sequence of Cronobacter sakazakii BAA-894 and comparative genomic hybridization analysis with other Cronobacter species.</title>
        <authorList>
            <person name="Kucerova E."/>
            <person name="Clifton S.W."/>
            <person name="Xia X.Q."/>
            <person name="Long F."/>
            <person name="Porwollik S."/>
            <person name="Fulton L."/>
            <person name="Fronick C."/>
            <person name="Minx P."/>
            <person name="Kyung K."/>
            <person name="Warren W."/>
            <person name="Fulton R."/>
            <person name="Feng D."/>
            <person name="Wollam A."/>
            <person name="Shah N."/>
            <person name="Bhonagiri V."/>
            <person name="Nash W.E."/>
            <person name="Hallsworth-Pepin K."/>
            <person name="Wilson R.K."/>
            <person name="McClelland M."/>
            <person name="Forsythe S.J."/>
        </authorList>
    </citation>
    <scope>NUCLEOTIDE SEQUENCE [LARGE SCALE GENOMIC DNA]</scope>
    <source>
        <strain>ATCC BAA-894</strain>
    </source>
</reference>
<gene>
    <name evidence="1" type="primary">dcd</name>
    <name type="ordered locus">ESA_01153</name>
</gene>
<organism>
    <name type="scientific">Cronobacter sakazakii (strain ATCC BAA-894)</name>
    <name type="common">Enterobacter sakazakii</name>
    <dbReference type="NCBI Taxonomy" id="290339"/>
    <lineage>
        <taxon>Bacteria</taxon>
        <taxon>Pseudomonadati</taxon>
        <taxon>Pseudomonadota</taxon>
        <taxon>Gammaproteobacteria</taxon>
        <taxon>Enterobacterales</taxon>
        <taxon>Enterobacteriaceae</taxon>
        <taxon>Cronobacter</taxon>
    </lineage>
</organism>
<protein>
    <recommendedName>
        <fullName evidence="1">dCTP deaminase</fullName>
        <ecNumber evidence="1">3.5.4.13</ecNumber>
    </recommendedName>
    <alternativeName>
        <fullName evidence="1">Deoxycytidine triphosphate deaminase</fullName>
    </alternativeName>
</protein>
<name>DCD_CROS8</name>